<organism>
    <name type="scientific">Treponema denticola (strain ATCC 35405 / DSM 14222 / CIP 103919 / JCM 8153 / KCTC 15104)</name>
    <dbReference type="NCBI Taxonomy" id="243275"/>
    <lineage>
        <taxon>Bacteria</taxon>
        <taxon>Pseudomonadati</taxon>
        <taxon>Spirochaetota</taxon>
        <taxon>Spirochaetia</taxon>
        <taxon>Spirochaetales</taxon>
        <taxon>Treponemataceae</taxon>
        <taxon>Treponema</taxon>
    </lineage>
</organism>
<keyword id="KW-0963">Cytoplasm</keyword>
<keyword id="KW-0251">Elongation factor</keyword>
<keyword id="KW-0648">Protein biosynthesis</keyword>
<keyword id="KW-1185">Reference proteome</keyword>
<gene>
    <name evidence="1" type="primary">tsf</name>
    <name type="ordered locus">TDE_2346</name>
</gene>
<sequence length="280" mass="31131">MDIKASDVKELRDKTGAGMMECKKALQHCNGDAKEAEKYLKEKGLAAVEKRADRVTSEGIIVIKSDHKKAVMLEMTCETDFVAKNADFIAVGEDIAKTAFDKDISEVTPELNDKLLDLATRVRENMNLTRLINVKAGADEYLSRYIHSDKKTGVIIVLKSDKPEIFEKTEVQEFAYDCCLHAAAFMPLYVKKEDVDAAYIKEQEEIFKGQVAELNKPDNVKEGIVKGKISKHLSEICFLEQAFVKDDKLSVSKKMAEVGKEAGGSLSLSKLVIFQLGLGM</sequence>
<feature type="chain" id="PRO_0000161224" description="Elongation factor Ts">
    <location>
        <begin position="1"/>
        <end position="280"/>
    </location>
</feature>
<feature type="region of interest" description="Involved in Mg(2+) ion dislocation from EF-Tu" evidence="1">
    <location>
        <begin position="79"/>
        <end position="82"/>
    </location>
</feature>
<protein>
    <recommendedName>
        <fullName evidence="1">Elongation factor Ts</fullName>
        <shortName evidence="1">EF-Ts</shortName>
    </recommendedName>
</protein>
<reference key="1">
    <citation type="journal article" date="2004" name="Proc. Natl. Acad. Sci. U.S.A.">
        <title>Comparison of the genome of the oral pathogen Treponema denticola with other spirochete genomes.</title>
        <authorList>
            <person name="Seshadri R."/>
            <person name="Myers G.S.A."/>
            <person name="Tettelin H."/>
            <person name="Eisen J.A."/>
            <person name="Heidelberg J.F."/>
            <person name="Dodson R.J."/>
            <person name="Davidsen T.M."/>
            <person name="DeBoy R.T."/>
            <person name="Fouts D.E."/>
            <person name="Haft D.H."/>
            <person name="Selengut J."/>
            <person name="Ren Q."/>
            <person name="Brinkac L.M."/>
            <person name="Madupu R."/>
            <person name="Kolonay J.F."/>
            <person name="Durkin S.A."/>
            <person name="Daugherty S.C."/>
            <person name="Shetty J."/>
            <person name="Shvartsbeyn A."/>
            <person name="Gebregeorgis E."/>
            <person name="Geer K."/>
            <person name="Tsegaye G."/>
            <person name="Malek J.A."/>
            <person name="Ayodeji B."/>
            <person name="Shatsman S."/>
            <person name="McLeod M.P."/>
            <person name="Smajs D."/>
            <person name="Howell J.K."/>
            <person name="Pal S."/>
            <person name="Amin A."/>
            <person name="Vashisth P."/>
            <person name="McNeill T.Z."/>
            <person name="Xiang Q."/>
            <person name="Sodergren E."/>
            <person name="Baca E."/>
            <person name="Weinstock G.M."/>
            <person name="Norris S.J."/>
            <person name="Fraser C.M."/>
            <person name="Paulsen I.T."/>
        </authorList>
    </citation>
    <scope>NUCLEOTIDE SEQUENCE [LARGE SCALE GENOMIC DNA]</scope>
    <source>
        <strain>ATCC 35405 / DSM 14222 / CIP 103919 / JCM 8153 / KCTC 15104</strain>
    </source>
</reference>
<accession>P61339</accession>
<proteinExistence type="inferred from homology"/>
<name>EFTS_TREDE</name>
<evidence type="ECO:0000255" key="1">
    <source>
        <dbReference type="HAMAP-Rule" id="MF_00050"/>
    </source>
</evidence>
<dbReference type="EMBL" id="AE017226">
    <property type="protein sequence ID" value="AAS12864.1"/>
    <property type="molecule type" value="Genomic_DNA"/>
</dbReference>
<dbReference type="RefSeq" id="NP_972945.1">
    <property type="nucleotide sequence ID" value="NC_002967.9"/>
</dbReference>
<dbReference type="RefSeq" id="WP_002674264.1">
    <property type="nucleotide sequence ID" value="NC_002967.9"/>
</dbReference>
<dbReference type="SMR" id="P61339"/>
<dbReference type="STRING" id="243275.TDE_2346"/>
<dbReference type="PaxDb" id="243275-TDE_2346"/>
<dbReference type="GeneID" id="2739441"/>
<dbReference type="KEGG" id="tde:TDE_2346"/>
<dbReference type="PATRIC" id="fig|243275.7.peg.2214"/>
<dbReference type="eggNOG" id="COG0264">
    <property type="taxonomic scope" value="Bacteria"/>
</dbReference>
<dbReference type="HOGENOM" id="CLU_047155_0_2_12"/>
<dbReference type="OrthoDB" id="9808348at2"/>
<dbReference type="Proteomes" id="UP000008212">
    <property type="component" value="Chromosome"/>
</dbReference>
<dbReference type="GO" id="GO:0005737">
    <property type="term" value="C:cytoplasm"/>
    <property type="evidence" value="ECO:0007669"/>
    <property type="project" value="UniProtKB-SubCell"/>
</dbReference>
<dbReference type="GO" id="GO:0003746">
    <property type="term" value="F:translation elongation factor activity"/>
    <property type="evidence" value="ECO:0007669"/>
    <property type="project" value="UniProtKB-UniRule"/>
</dbReference>
<dbReference type="CDD" id="cd14275">
    <property type="entry name" value="UBA_EF-Ts"/>
    <property type="match status" value="1"/>
</dbReference>
<dbReference type="FunFam" id="1.10.8.10:FF:000001">
    <property type="entry name" value="Elongation factor Ts"/>
    <property type="match status" value="1"/>
</dbReference>
<dbReference type="Gene3D" id="1.10.286.20">
    <property type="match status" value="1"/>
</dbReference>
<dbReference type="Gene3D" id="1.10.8.10">
    <property type="entry name" value="DNA helicase RuvA subunit, C-terminal domain"/>
    <property type="match status" value="1"/>
</dbReference>
<dbReference type="Gene3D" id="3.30.479.20">
    <property type="entry name" value="Elongation factor Ts, dimerisation domain"/>
    <property type="match status" value="2"/>
</dbReference>
<dbReference type="HAMAP" id="MF_00050">
    <property type="entry name" value="EF_Ts"/>
    <property type="match status" value="1"/>
</dbReference>
<dbReference type="InterPro" id="IPR036402">
    <property type="entry name" value="EF-Ts_dimer_sf"/>
</dbReference>
<dbReference type="InterPro" id="IPR001816">
    <property type="entry name" value="Transl_elong_EFTs/EF1B"/>
</dbReference>
<dbReference type="InterPro" id="IPR014039">
    <property type="entry name" value="Transl_elong_EFTs/EF1B_dimer"/>
</dbReference>
<dbReference type="InterPro" id="IPR018101">
    <property type="entry name" value="Transl_elong_Ts_CS"/>
</dbReference>
<dbReference type="InterPro" id="IPR009060">
    <property type="entry name" value="UBA-like_sf"/>
</dbReference>
<dbReference type="NCBIfam" id="TIGR00116">
    <property type="entry name" value="tsf"/>
    <property type="match status" value="1"/>
</dbReference>
<dbReference type="PANTHER" id="PTHR11741">
    <property type="entry name" value="ELONGATION FACTOR TS"/>
    <property type="match status" value="1"/>
</dbReference>
<dbReference type="PANTHER" id="PTHR11741:SF0">
    <property type="entry name" value="ELONGATION FACTOR TS, MITOCHONDRIAL"/>
    <property type="match status" value="1"/>
</dbReference>
<dbReference type="Pfam" id="PF00889">
    <property type="entry name" value="EF_TS"/>
    <property type="match status" value="1"/>
</dbReference>
<dbReference type="SUPFAM" id="SSF54713">
    <property type="entry name" value="Elongation factor Ts (EF-Ts), dimerisation domain"/>
    <property type="match status" value="2"/>
</dbReference>
<dbReference type="SUPFAM" id="SSF46934">
    <property type="entry name" value="UBA-like"/>
    <property type="match status" value="1"/>
</dbReference>
<dbReference type="PROSITE" id="PS01126">
    <property type="entry name" value="EF_TS_1"/>
    <property type="match status" value="1"/>
</dbReference>
<dbReference type="PROSITE" id="PS01127">
    <property type="entry name" value="EF_TS_2"/>
    <property type="match status" value="1"/>
</dbReference>
<comment type="function">
    <text evidence="1">Associates with the EF-Tu.GDP complex and induces the exchange of GDP to GTP. It remains bound to the aminoacyl-tRNA.EF-Tu.GTP complex up to the GTP hydrolysis stage on the ribosome.</text>
</comment>
<comment type="subcellular location">
    <subcellularLocation>
        <location evidence="1">Cytoplasm</location>
    </subcellularLocation>
</comment>
<comment type="similarity">
    <text evidence="1">Belongs to the EF-Ts family.</text>
</comment>